<gene>
    <name type="primary">taf5</name>
    <name type="synonym">taf72</name>
    <name type="ORF">SPCC5E4.03c</name>
</gene>
<sequence>MSATNGPQPQDLNRIVLDYLAKKGYSRTEAMLRLEASGSGVSVEEKLKSIEETPDAYTHTYTILRDWVDSSLELYKAELHRILFPIFVHSYLNLLSQDHYEAAKQFYELFKDDHTDLHDFDVKNLKSLSLPSHVAEDRTAQQYRQNKYQLHFSRITFDLLLHFLFENVSNGGSIIIKLINQHIDIHIVPGRPTVLENAKVINEQEGITGQSFERGDAQLQPVKLQQMPMDKEMEKIVEMDLEEEDMMHQNDPNNQSPKLLKEFRKLHEPNAEDAPSRDYIPLPPHKGVDILSEVEAVKDWSKRLHLGPRASLPSVCMYTFHHTNNNMNCAEFSPDSTMIACGFQESYIRLWSIKADKKSLPKSTSVEDSDGSVRLLSHSGPVYGTTFSPDNKYLLSCSEDASARLWSVDTKTALVAYKGHTGPVWDVAFGPFGHYFATASHDQTAQLWSCDHIYPLRVFAGHLSDVDCVTFHPNSAYVLTGSSDKTCRLWDVHRGHSVRVFNGHTQPVTAVAIAPDGHTMASADSEGLIHLWDIGTGRRIKTMRGHRGNIYSLSFSRESTVLVSGGSDCTVRAWDVFKTNYNNPVSSSLTGSVVTPFSAKTSTFNEVNWSTSPDQMVALYTKQTPIFNVSFTRRNLCLAISVS</sequence>
<organism>
    <name type="scientific">Schizosaccharomyces pombe (strain 972 / ATCC 24843)</name>
    <name type="common">Fission yeast</name>
    <dbReference type="NCBI Taxonomy" id="284812"/>
    <lineage>
        <taxon>Eukaryota</taxon>
        <taxon>Fungi</taxon>
        <taxon>Dikarya</taxon>
        <taxon>Ascomycota</taxon>
        <taxon>Taphrinomycotina</taxon>
        <taxon>Schizosaccharomycetes</taxon>
        <taxon>Schizosaccharomycetales</taxon>
        <taxon>Schizosaccharomycetaceae</taxon>
        <taxon>Schizosaccharomyces</taxon>
    </lineage>
</organism>
<feature type="chain" id="PRO_0000051259" description="SAGA complex/transcription factor TFIID complex subunit Taf5">
    <location>
        <begin position="1"/>
        <end position="643"/>
    </location>
</feature>
<feature type="domain" description="LisH" evidence="3">
    <location>
        <begin position="8"/>
        <end position="40"/>
    </location>
</feature>
<feature type="repeat" description="WD 1" evidence="2">
    <location>
        <begin position="322"/>
        <end position="361"/>
    </location>
</feature>
<feature type="repeat" description="WD 2" evidence="2">
    <location>
        <begin position="377"/>
        <end position="416"/>
    </location>
</feature>
<feature type="repeat" description="WD 3" evidence="2">
    <location>
        <begin position="419"/>
        <end position="458"/>
    </location>
</feature>
<feature type="repeat" description="WD 4" evidence="2">
    <location>
        <begin position="461"/>
        <end position="500"/>
    </location>
</feature>
<feature type="repeat" description="WD 5" evidence="2">
    <location>
        <begin position="503"/>
        <end position="542"/>
    </location>
</feature>
<feature type="repeat" description="WD 6" evidence="2">
    <location>
        <begin position="545"/>
        <end position="584"/>
    </location>
</feature>
<feature type="modified residue" description="Phosphoserine" evidence="6">
    <location>
        <position position="256"/>
    </location>
</feature>
<name>TAF5_SCHPO</name>
<dbReference type="EMBL" id="AB001372">
    <property type="protein sequence ID" value="BAA22162.1"/>
    <property type="molecule type" value="Genomic_DNA"/>
</dbReference>
<dbReference type="EMBL" id="CU329672">
    <property type="protein sequence ID" value="CAA21958.1"/>
    <property type="molecule type" value="Genomic_DNA"/>
</dbReference>
<dbReference type="PIR" id="T41454">
    <property type="entry name" value="T41454"/>
</dbReference>
<dbReference type="RefSeq" id="NP_587902.1">
    <property type="nucleotide sequence ID" value="NM_001022894.2"/>
</dbReference>
<dbReference type="SMR" id="O13282"/>
<dbReference type="BioGRID" id="275919">
    <property type="interactions" value="21"/>
</dbReference>
<dbReference type="FunCoup" id="O13282">
    <property type="interactions" value="275"/>
</dbReference>
<dbReference type="IntAct" id="O13282">
    <property type="interactions" value="7"/>
</dbReference>
<dbReference type="MINT" id="O13282"/>
<dbReference type="STRING" id="284812.O13282"/>
<dbReference type="iPTMnet" id="O13282"/>
<dbReference type="PaxDb" id="4896-SPCC5E4.03c.1"/>
<dbReference type="EnsemblFungi" id="SPCC5E4.03c.1">
    <property type="protein sequence ID" value="SPCC5E4.03c.1:pep"/>
    <property type="gene ID" value="SPCC5E4.03c"/>
</dbReference>
<dbReference type="GeneID" id="2539353"/>
<dbReference type="KEGG" id="spo:2539353"/>
<dbReference type="PomBase" id="SPCC5E4.03c">
    <property type="gene designation" value="taf5"/>
</dbReference>
<dbReference type="VEuPathDB" id="FungiDB:SPCC5E4.03c"/>
<dbReference type="eggNOG" id="KOG0263">
    <property type="taxonomic scope" value="Eukaryota"/>
</dbReference>
<dbReference type="HOGENOM" id="CLU_005884_0_2_1"/>
<dbReference type="InParanoid" id="O13282"/>
<dbReference type="OMA" id="HNHPVWD"/>
<dbReference type="PhylomeDB" id="O13282"/>
<dbReference type="Reactome" id="R-SPO-674695">
    <property type="pathway name" value="RNA Polymerase II Pre-transcription Events"/>
</dbReference>
<dbReference type="Reactome" id="R-SPO-6807505">
    <property type="pathway name" value="RNA polymerase II transcribes snRNA genes"/>
</dbReference>
<dbReference type="Reactome" id="R-SPO-73776">
    <property type="pathway name" value="RNA Polymerase II Promoter Escape"/>
</dbReference>
<dbReference type="Reactome" id="R-SPO-73779">
    <property type="pathway name" value="RNA Polymerase II Transcription Pre-Initiation And Promoter Opening"/>
</dbReference>
<dbReference type="Reactome" id="R-SPO-75953">
    <property type="pathway name" value="RNA Polymerase II Transcription Initiation"/>
</dbReference>
<dbReference type="Reactome" id="R-SPO-76042">
    <property type="pathway name" value="RNA Polymerase II Transcription Initiation And Promoter Clearance"/>
</dbReference>
<dbReference type="Reactome" id="R-SPO-9907900">
    <property type="pathway name" value="Proteasome assembly"/>
</dbReference>
<dbReference type="PRO" id="PR:O13282"/>
<dbReference type="Proteomes" id="UP000002485">
    <property type="component" value="Chromosome III"/>
</dbReference>
<dbReference type="GO" id="GO:0005829">
    <property type="term" value="C:cytosol"/>
    <property type="evidence" value="ECO:0007005"/>
    <property type="project" value="PomBase"/>
</dbReference>
<dbReference type="GO" id="GO:0005634">
    <property type="term" value="C:nucleus"/>
    <property type="evidence" value="ECO:0007005"/>
    <property type="project" value="PomBase"/>
</dbReference>
<dbReference type="GO" id="GO:0000124">
    <property type="term" value="C:SAGA complex"/>
    <property type="evidence" value="ECO:0000314"/>
    <property type="project" value="PomBase"/>
</dbReference>
<dbReference type="GO" id="GO:0005669">
    <property type="term" value="C:transcription factor TFIID complex"/>
    <property type="evidence" value="ECO:0000314"/>
    <property type="project" value="PomBase"/>
</dbReference>
<dbReference type="GO" id="GO:0016251">
    <property type="term" value="F:RNA polymerase II general transcription initiation factor activity"/>
    <property type="evidence" value="ECO:0000269"/>
    <property type="project" value="PomBase"/>
</dbReference>
<dbReference type="GO" id="GO:0045893">
    <property type="term" value="P:positive regulation of DNA-templated transcription"/>
    <property type="evidence" value="ECO:0007669"/>
    <property type="project" value="GOC"/>
</dbReference>
<dbReference type="GO" id="GO:0006367">
    <property type="term" value="P:transcription initiation at RNA polymerase II promoter"/>
    <property type="evidence" value="ECO:0000269"/>
    <property type="project" value="PomBase"/>
</dbReference>
<dbReference type="GO" id="GO:0045815">
    <property type="term" value="P:transcription initiation-coupled chromatin remodeling"/>
    <property type="evidence" value="ECO:0000305"/>
    <property type="project" value="PomBase"/>
</dbReference>
<dbReference type="CDD" id="cd08044">
    <property type="entry name" value="TAF5_NTD2"/>
    <property type="match status" value="1"/>
</dbReference>
<dbReference type="CDD" id="cd00200">
    <property type="entry name" value="WD40"/>
    <property type="match status" value="1"/>
</dbReference>
<dbReference type="FunFam" id="2.130.10.10:FF:000202">
    <property type="entry name" value="TAF5-like RNA polymerase II p300/CBP-associated factor-associated factor 65 kDa subunit 5L"/>
    <property type="match status" value="1"/>
</dbReference>
<dbReference type="FunFam" id="1.25.40.500:FF:000004">
    <property type="entry name" value="Transcription initiation factor TFIID subunit"/>
    <property type="match status" value="1"/>
</dbReference>
<dbReference type="Gene3D" id="1.25.40.500">
    <property type="entry name" value="TFIID subunit TAF5, NTD2 domain"/>
    <property type="match status" value="1"/>
</dbReference>
<dbReference type="Gene3D" id="2.130.10.10">
    <property type="entry name" value="YVTN repeat-like/Quinoprotein amine dehydrogenase"/>
    <property type="match status" value="3"/>
</dbReference>
<dbReference type="InterPro" id="IPR020472">
    <property type="entry name" value="G-protein_beta_WD-40_rep"/>
</dbReference>
<dbReference type="InterPro" id="IPR006594">
    <property type="entry name" value="LisH"/>
</dbReference>
<dbReference type="InterPro" id="IPR007582">
    <property type="entry name" value="TFIID_NTD2"/>
</dbReference>
<dbReference type="InterPro" id="IPR037264">
    <property type="entry name" value="TFIID_NTD2_sf"/>
</dbReference>
<dbReference type="InterPro" id="IPR015943">
    <property type="entry name" value="WD40/YVTN_repeat-like_dom_sf"/>
</dbReference>
<dbReference type="InterPro" id="IPR019775">
    <property type="entry name" value="WD40_repeat_CS"/>
</dbReference>
<dbReference type="InterPro" id="IPR036322">
    <property type="entry name" value="WD40_repeat_dom_sf"/>
</dbReference>
<dbReference type="InterPro" id="IPR001680">
    <property type="entry name" value="WD40_rpt"/>
</dbReference>
<dbReference type="PANTHER" id="PTHR19879:SF1">
    <property type="entry name" value="CANNONBALL-RELATED"/>
    <property type="match status" value="1"/>
</dbReference>
<dbReference type="PANTHER" id="PTHR19879">
    <property type="entry name" value="TRANSCRIPTION INITIATION FACTOR TFIID"/>
    <property type="match status" value="1"/>
</dbReference>
<dbReference type="Pfam" id="PF08513">
    <property type="entry name" value="LisH"/>
    <property type="match status" value="1"/>
</dbReference>
<dbReference type="Pfam" id="PF04494">
    <property type="entry name" value="TFIID_NTD2"/>
    <property type="match status" value="1"/>
</dbReference>
<dbReference type="Pfam" id="PF00400">
    <property type="entry name" value="WD40"/>
    <property type="match status" value="6"/>
</dbReference>
<dbReference type="PRINTS" id="PR00320">
    <property type="entry name" value="GPROTEINBRPT"/>
</dbReference>
<dbReference type="SMART" id="SM00667">
    <property type="entry name" value="LisH"/>
    <property type="match status" value="1"/>
</dbReference>
<dbReference type="SMART" id="SM00320">
    <property type="entry name" value="WD40"/>
    <property type="match status" value="6"/>
</dbReference>
<dbReference type="SUPFAM" id="SSF160897">
    <property type="entry name" value="Taf5 N-terminal domain-like"/>
    <property type="match status" value="1"/>
</dbReference>
<dbReference type="SUPFAM" id="SSF50978">
    <property type="entry name" value="WD40 repeat-like"/>
    <property type="match status" value="1"/>
</dbReference>
<dbReference type="PROSITE" id="PS50896">
    <property type="entry name" value="LISH"/>
    <property type="match status" value="1"/>
</dbReference>
<dbReference type="PROSITE" id="PS00678">
    <property type="entry name" value="WD_REPEATS_1"/>
    <property type="match status" value="2"/>
</dbReference>
<dbReference type="PROSITE" id="PS50082">
    <property type="entry name" value="WD_REPEATS_2"/>
    <property type="match status" value="6"/>
</dbReference>
<dbReference type="PROSITE" id="PS50294">
    <property type="entry name" value="WD_REPEATS_REGION"/>
    <property type="match status" value="1"/>
</dbReference>
<protein>
    <recommendedName>
        <fullName>SAGA complex/transcription factor TFIID complex subunit Taf5</fullName>
    </recommendedName>
    <alternativeName>
        <fullName>Transcription initiation factor TFIID 72 kDa subunit</fullName>
        <shortName>TAFII-72</shortName>
    </alternativeName>
    <alternativeName>
        <fullName>Transcription initiation factor TFIID subunit 5</fullName>
    </alternativeName>
</protein>
<proteinExistence type="evidence at protein level"/>
<reference key="1">
    <citation type="journal article" date="1997" name="Genes Cells">
        <title>Molecular genetic elucidation of the tripartite structure of the Schizosaccharomyces pombe 72 kDa TFIID subunit which contains a WD40 structural motif.</title>
        <authorList>
            <person name="Yamamoto T."/>
            <person name="Poon D."/>
            <person name="Weil P.A."/>
            <person name="Horikoshi M."/>
        </authorList>
    </citation>
    <scope>NUCLEOTIDE SEQUENCE [GENOMIC DNA]</scope>
</reference>
<reference key="2">
    <citation type="journal article" date="2002" name="Nature">
        <title>The genome sequence of Schizosaccharomyces pombe.</title>
        <authorList>
            <person name="Wood V."/>
            <person name="Gwilliam R."/>
            <person name="Rajandream M.A."/>
            <person name="Lyne M.H."/>
            <person name="Lyne R."/>
            <person name="Stewart A."/>
            <person name="Sgouros J.G."/>
            <person name="Peat N."/>
            <person name="Hayles J."/>
            <person name="Baker S.G."/>
            <person name="Basham D."/>
            <person name="Bowman S."/>
            <person name="Brooks K."/>
            <person name="Brown D."/>
            <person name="Brown S."/>
            <person name="Chillingworth T."/>
            <person name="Churcher C.M."/>
            <person name="Collins M."/>
            <person name="Connor R."/>
            <person name="Cronin A."/>
            <person name="Davis P."/>
            <person name="Feltwell T."/>
            <person name="Fraser A."/>
            <person name="Gentles S."/>
            <person name="Goble A."/>
            <person name="Hamlin N."/>
            <person name="Harris D.E."/>
            <person name="Hidalgo J."/>
            <person name="Hodgson G."/>
            <person name="Holroyd S."/>
            <person name="Hornsby T."/>
            <person name="Howarth S."/>
            <person name="Huckle E.J."/>
            <person name="Hunt S."/>
            <person name="Jagels K."/>
            <person name="James K.D."/>
            <person name="Jones L."/>
            <person name="Jones M."/>
            <person name="Leather S."/>
            <person name="McDonald S."/>
            <person name="McLean J."/>
            <person name="Mooney P."/>
            <person name="Moule S."/>
            <person name="Mungall K.L."/>
            <person name="Murphy L.D."/>
            <person name="Niblett D."/>
            <person name="Odell C."/>
            <person name="Oliver K."/>
            <person name="O'Neil S."/>
            <person name="Pearson D."/>
            <person name="Quail M.A."/>
            <person name="Rabbinowitsch E."/>
            <person name="Rutherford K.M."/>
            <person name="Rutter S."/>
            <person name="Saunders D."/>
            <person name="Seeger K."/>
            <person name="Sharp S."/>
            <person name="Skelton J."/>
            <person name="Simmonds M.N."/>
            <person name="Squares R."/>
            <person name="Squares S."/>
            <person name="Stevens K."/>
            <person name="Taylor K."/>
            <person name="Taylor R.G."/>
            <person name="Tivey A."/>
            <person name="Walsh S.V."/>
            <person name="Warren T."/>
            <person name="Whitehead S."/>
            <person name="Woodward J.R."/>
            <person name="Volckaert G."/>
            <person name="Aert R."/>
            <person name="Robben J."/>
            <person name="Grymonprez B."/>
            <person name="Weltjens I."/>
            <person name="Vanstreels E."/>
            <person name="Rieger M."/>
            <person name="Schaefer M."/>
            <person name="Mueller-Auer S."/>
            <person name="Gabel C."/>
            <person name="Fuchs M."/>
            <person name="Duesterhoeft A."/>
            <person name="Fritzc C."/>
            <person name="Holzer E."/>
            <person name="Moestl D."/>
            <person name="Hilbert H."/>
            <person name="Borzym K."/>
            <person name="Langer I."/>
            <person name="Beck A."/>
            <person name="Lehrach H."/>
            <person name="Reinhardt R."/>
            <person name="Pohl T.M."/>
            <person name="Eger P."/>
            <person name="Zimmermann W."/>
            <person name="Wedler H."/>
            <person name="Wambutt R."/>
            <person name="Purnelle B."/>
            <person name="Goffeau A."/>
            <person name="Cadieu E."/>
            <person name="Dreano S."/>
            <person name="Gloux S."/>
            <person name="Lelaure V."/>
            <person name="Mottier S."/>
            <person name="Galibert F."/>
            <person name="Aves S.J."/>
            <person name="Xiang Z."/>
            <person name="Hunt C."/>
            <person name="Moore K."/>
            <person name="Hurst S.M."/>
            <person name="Lucas M."/>
            <person name="Rochet M."/>
            <person name="Gaillardin C."/>
            <person name="Tallada V.A."/>
            <person name="Garzon A."/>
            <person name="Thode G."/>
            <person name="Daga R.R."/>
            <person name="Cruzado L."/>
            <person name="Jimenez J."/>
            <person name="Sanchez M."/>
            <person name="del Rey F."/>
            <person name="Benito J."/>
            <person name="Dominguez A."/>
            <person name="Revuelta J.L."/>
            <person name="Moreno S."/>
            <person name="Armstrong J."/>
            <person name="Forsburg S.L."/>
            <person name="Cerutti L."/>
            <person name="Lowe T."/>
            <person name="McCombie W.R."/>
            <person name="Paulsen I."/>
            <person name="Potashkin J."/>
            <person name="Shpakovski G.V."/>
            <person name="Ussery D."/>
            <person name="Barrell B.G."/>
            <person name="Nurse P."/>
        </authorList>
    </citation>
    <scope>NUCLEOTIDE SEQUENCE [LARGE SCALE GENOMIC DNA]</scope>
    <source>
        <strain>972 / ATCC 24843</strain>
    </source>
</reference>
<reference key="3">
    <citation type="journal article" date="2001" name="J. Biol. Chem.">
        <title>Two WD repeat-containing TATA-binding protein-associated factors in fission yeast that suppress defects in the anaphase-promoting complex.</title>
        <authorList>
            <person name="Mitsuzawa H."/>
            <person name="Seino H."/>
            <person name="Yamao F."/>
            <person name="Ishihama A."/>
        </authorList>
    </citation>
    <scope>FUNCTION</scope>
    <scope>INTERACTION WITH GCN5</scope>
</reference>
<reference key="4">
    <citation type="journal article" date="2002" name="Nucleic Acids Res.">
        <title>Identification of histone H4-like TAF in Schizosaccharomyces pombe as a protein that interacts with WD repeat-containing TAF.</title>
        <authorList>
            <person name="Mitsuzawa H."/>
            <person name="Ishihama A."/>
        </authorList>
    </citation>
    <scope>INTERACTION WITH TAF6 AND GCN5</scope>
</reference>
<reference key="5">
    <citation type="journal article" date="2008" name="Genes Dev.">
        <title>The S. pombe SAGA complex controls the switch from proliferation to sexual differentiation through the opposing roles of its subunits Gcn5 and Spt8.</title>
        <authorList>
            <person name="Helmlinger D."/>
            <person name="Marguerat S."/>
            <person name="Villen J."/>
            <person name="Gygi S.P."/>
            <person name="Bahler J."/>
            <person name="Winston F."/>
        </authorList>
    </citation>
    <scope>IDENTIFICATION IN THE SAGA COMPLEX</scope>
    <scope>IDENTIFICATION BY MASS SPECTROMETRY</scope>
</reference>
<reference key="6">
    <citation type="journal article" date="2008" name="J. Proteome Res.">
        <title>Phosphoproteome analysis of fission yeast.</title>
        <authorList>
            <person name="Wilson-Grady J.T."/>
            <person name="Villen J."/>
            <person name="Gygi S.P."/>
        </authorList>
    </citation>
    <scope>PHOSPHORYLATION [LARGE SCALE ANALYSIS] AT SER-256</scope>
    <scope>IDENTIFICATION BY MASS SPECTROMETRY</scope>
</reference>
<reference key="7">
    <citation type="journal article" date="2009" name="Structure">
        <title>Cryo-EM reveals promoter DNA binding and conformational flexibility of the general transcription factor TFIID.</title>
        <authorList>
            <person name="Elmlund H."/>
            <person name="Baraznenok V."/>
            <person name="Linder T."/>
            <person name="Szilagyi Z."/>
            <person name="Rofougaran R."/>
            <person name="Hofer A."/>
            <person name="Hebert H."/>
            <person name="Lindahl M."/>
            <person name="Gustafsson C.M."/>
        </authorList>
    </citation>
    <scope>STRUCTURE BY ELECTRON MICROSCOPY OF TFIID</scope>
</reference>
<accession>O13282</accession>
<keyword id="KW-0539">Nucleus</keyword>
<keyword id="KW-0597">Phosphoprotein</keyword>
<keyword id="KW-1185">Reference proteome</keyword>
<keyword id="KW-0677">Repeat</keyword>
<keyword id="KW-0804">Transcription</keyword>
<keyword id="KW-0805">Transcription regulation</keyword>
<keyword id="KW-0853">WD repeat</keyword>
<evidence type="ECO:0000250" key="1">
    <source>
        <dbReference type="UniProtKB" id="P38129"/>
    </source>
</evidence>
<evidence type="ECO:0000255" key="2"/>
<evidence type="ECO:0000255" key="3">
    <source>
        <dbReference type="PROSITE-ProRule" id="PRU00126"/>
    </source>
</evidence>
<evidence type="ECO:0000269" key="4">
    <source>
    </source>
</evidence>
<evidence type="ECO:0000269" key="5">
    <source>
    </source>
</evidence>
<evidence type="ECO:0000269" key="6">
    <source>
    </source>
</evidence>
<evidence type="ECO:0000269" key="7">
    <source>
    </source>
</evidence>
<evidence type="ECO:0000269" key="8">
    <source>
    </source>
</evidence>
<evidence type="ECO:0000305" key="9"/>
<comment type="function">
    <text evidence="1 4">Functions as a component of both the DNA-binding general transcription initiation factor complex TFIID and the transcription coactivator SAGA complex. Binding of TFIID to a promoter (with or without TATA element) is the initial step in pre-initiation complex (PIC) formation. TFIID plays a key role in the regulation of gene expression by RNA polymerase II through different activities such as transcription activator interaction, core promoter recognition and selectivity, TFIIA and TFIIB interaction, chromatin modification (histone acetylation by TAF1), facilitation of DNA opening and initiation of transcription. SAGA acts as a general cofactor required for essentially all RNA polymerase II transcription. At the promoters, SAGA is required for transcription pre-initiation complex (PIC) recruitment. It influences RNA polymerase II transcriptional activity through different activities such as TBP interaction (via core/TAF module) and promoter selectivity, interaction with transcription activators (via Tra1/SPT module), and chromatin modification through histone acetylation (via HAT module) and deubiquitination (via DUB module). SAGA preferentially acetylates histones H3 (to form H3K9ac, H3K14ac, H3K18ac and H3K23ac) and H2B and deubiquitinates histone H2B. SAGA interacts with DNA via upstream activating sequences (UASs) (By similarity). Regulates the genes involved in ubiquitin-dependent proteolysis during the progression of M-phase of mitosis (PubMed:11279037).</text>
</comment>
<comment type="subunit">
    <text evidence="1 4 5 7 8">Component of the 1.8 MDa SAGA (Spt-Ada-Gcn5 acetyltransferase) complex, which is composed of 19 subunits tra1, spt7, taf5, ngg1/ada3, sgf73, spt20, spt8, taf12, taf6, hfi1/ada1, ubp8, gcn5, ada2, spt3, sgf29, taf10, taf9, sgf11 and sus1 (PubMed:19056896). The SAGA complex is composed of 4 modules, namely the HAT (histone acetyltransferase) module (gcn5, ada2, ngg1/ada3 and sgf29), the DUB (deubiquitinating) module (ubp8, sgf11, sgf73 and sus1), the core or TAF (TBP-associated factor) module (taf5, taf6, taf9, taf10 and taf12), and the Tra1 or SPT (Suppressor of Ty) module (tra1, hfi1/ada1, spt3, spt7, spt8 and spt20). The Tra1/SPT module binds activators, the core module recruits TBP (TATA-binding protein), the HAT module contains the histone H3 acetyltransferase gcn5, and the DUB module comprises the histone H2B deubiquitinase ubp8 (By similarity). Interacts with gcn5 (PubMed:11279037, PubMed:11972332). Interacts (via C-terminal WD repeat-containing region) with taf6 (PubMed:11972332). Component of the 1.2 MDa TFIID complex, which is composed of TATA-binding protein (TBP) and the 14 TBP-associated factors (TAFs) (PubMed:19913479). It comprises 1 copy of each taf1, taf2, taf3, taf7, taf8, taf11, taf13, 2 copies of each taf4, taf5, taf6, taf9, taf10, taf12, and 3 copies of taf14 (By similarity).</text>
</comment>
<comment type="subcellular location">
    <subcellularLocation>
        <location evidence="1">Nucleus</location>
    </subcellularLocation>
</comment>
<comment type="domain">
    <text evidence="1">The C-terminal WD40 motifs are required for its incorporation into TFIID and function in SAGA.</text>
</comment>
<comment type="similarity">
    <text evidence="9">Belongs to the WD repeat TAF5 family.</text>
</comment>